<name>Y2245_ARATH</name>
<accession>Q8S8L9</accession>
<gene>
    <name type="ordered locus">At2g32450</name>
    <name type="ORF">T32F6.3</name>
</gene>
<protein>
    <recommendedName>
        <fullName>Uncharacterized TPR repeat-containing protein At2g32450</fullName>
    </recommendedName>
</protein>
<dbReference type="EMBL" id="AC005700">
    <property type="protein sequence ID" value="AAM15073.1"/>
    <property type="molecule type" value="Genomic_DNA"/>
</dbReference>
<dbReference type="EMBL" id="CP002685">
    <property type="protein sequence ID" value="AEC08687.1"/>
    <property type="molecule type" value="Genomic_DNA"/>
</dbReference>
<dbReference type="EMBL" id="BT004231">
    <property type="protein sequence ID" value="AAO42246.1"/>
    <property type="molecule type" value="mRNA"/>
</dbReference>
<dbReference type="EMBL" id="BT005684">
    <property type="protein sequence ID" value="AAO64104.1"/>
    <property type="molecule type" value="mRNA"/>
</dbReference>
<dbReference type="PIR" id="C84733">
    <property type="entry name" value="C84733"/>
</dbReference>
<dbReference type="PIR" id="T02544">
    <property type="entry name" value="T02544"/>
</dbReference>
<dbReference type="RefSeq" id="NP_180804.1">
    <property type="nucleotide sequence ID" value="NM_128804.3"/>
</dbReference>
<dbReference type="SMR" id="Q8S8L9"/>
<dbReference type="BioGRID" id="3153">
    <property type="interactions" value="2"/>
</dbReference>
<dbReference type="FunCoup" id="Q8S8L9">
    <property type="interactions" value="975"/>
</dbReference>
<dbReference type="IntAct" id="Q8S8L9">
    <property type="interactions" value="1"/>
</dbReference>
<dbReference type="STRING" id="3702.Q8S8L9"/>
<dbReference type="iPTMnet" id="Q8S8L9"/>
<dbReference type="PaxDb" id="3702-AT2G32450.1"/>
<dbReference type="ProteomicsDB" id="242538"/>
<dbReference type="EnsemblPlants" id="AT2G32450.1">
    <property type="protein sequence ID" value="AT2G32450.1"/>
    <property type="gene ID" value="AT2G32450"/>
</dbReference>
<dbReference type="GeneID" id="817806"/>
<dbReference type="Gramene" id="AT2G32450.1">
    <property type="protein sequence ID" value="AT2G32450.1"/>
    <property type="gene ID" value="AT2G32450"/>
</dbReference>
<dbReference type="KEGG" id="ath:AT2G32450"/>
<dbReference type="Araport" id="AT2G32450"/>
<dbReference type="TAIR" id="AT2G32450"/>
<dbReference type="eggNOG" id="KOG1124">
    <property type="taxonomic scope" value="Eukaryota"/>
</dbReference>
<dbReference type="HOGENOM" id="CLU_019072_0_0_1"/>
<dbReference type="InParanoid" id="Q8S8L9"/>
<dbReference type="OMA" id="MYDDSEW"/>
<dbReference type="PhylomeDB" id="Q8S8L9"/>
<dbReference type="PRO" id="PR:Q8S8L9"/>
<dbReference type="Proteomes" id="UP000006548">
    <property type="component" value="Chromosome 2"/>
</dbReference>
<dbReference type="ExpressionAtlas" id="Q8S8L9">
    <property type="expression patterns" value="baseline and differential"/>
</dbReference>
<dbReference type="GO" id="GO:0005783">
    <property type="term" value="C:endoplasmic reticulum"/>
    <property type="evidence" value="ECO:0007005"/>
    <property type="project" value="TAIR"/>
</dbReference>
<dbReference type="GO" id="GO:0005886">
    <property type="term" value="C:plasma membrane"/>
    <property type="evidence" value="ECO:0007005"/>
    <property type="project" value="TAIR"/>
</dbReference>
<dbReference type="GO" id="GO:0005509">
    <property type="term" value="F:calcium ion binding"/>
    <property type="evidence" value="ECO:0007669"/>
    <property type="project" value="InterPro"/>
</dbReference>
<dbReference type="FunFam" id="1.25.40.10:FF:000195">
    <property type="entry name" value="Putative TPR repeat-containing protein"/>
    <property type="match status" value="1"/>
</dbReference>
<dbReference type="FunFam" id="1.10.238.10:FF:000173">
    <property type="entry name" value="uncharacterized TPR repeat-containing protein At1g05150-like"/>
    <property type="match status" value="1"/>
</dbReference>
<dbReference type="FunFam" id="1.25.40.10:FF:000287">
    <property type="entry name" value="uncharacterized TPR repeat-containing protein At1g05150-like"/>
    <property type="match status" value="1"/>
</dbReference>
<dbReference type="Gene3D" id="1.10.238.10">
    <property type="entry name" value="EF-hand"/>
    <property type="match status" value="2"/>
</dbReference>
<dbReference type="Gene3D" id="1.25.40.10">
    <property type="entry name" value="Tetratricopeptide repeat domain"/>
    <property type="match status" value="3"/>
</dbReference>
<dbReference type="InterPro" id="IPR011992">
    <property type="entry name" value="EF-hand-dom_pair"/>
</dbReference>
<dbReference type="InterPro" id="IPR002048">
    <property type="entry name" value="EF_hand_dom"/>
</dbReference>
<dbReference type="InterPro" id="IPR011990">
    <property type="entry name" value="TPR-like_helical_dom_sf"/>
</dbReference>
<dbReference type="InterPro" id="IPR019734">
    <property type="entry name" value="TPR_rpt"/>
</dbReference>
<dbReference type="PANTHER" id="PTHR45081">
    <property type="entry name" value="EF HAND FAMILY PROTEIN, PUTATIVE, EXPRESSED-RELATED"/>
    <property type="match status" value="1"/>
</dbReference>
<dbReference type="PANTHER" id="PTHR45081:SF1">
    <property type="entry name" value="EF HAND FAMILY PROTEIN, PUTATIVE, EXPRESSED-RELATED"/>
    <property type="match status" value="1"/>
</dbReference>
<dbReference type="Pfam" id="PF13432">
    <property type="entry name" value="TPR_16"/>
    <property type="match status" value="2"/>
</dbReference>
<dbReference type="SMART" id="SM00028">
    <property type="entry name" value="TPR"/>
    <property type="match status" value="7"/>
</dbReference>
<dbReference type="SUPFAM" id="SSF47473">
    <property type="entry name" value="EF-hand"/>
    <property type="match status" value="2"/>
</dbReference>
<dbReference type="SUPFAM" id="SSF48452">
    <property type="entry name" value="TPR-like"/>
    <property type="match status" value="1"/>
</dbReference>
<dbReference type="PROSITE" id="PS50222">
    <property type="entry name" value="EF_HAND_2"/>
    <property type="match status" value="2"/>
</dbReference>
<dbReference type="PROSITE" id="PS50005">
    <property type="entry name" value="TPR"/>
    <property type="match status" value="7"/>
</dbReference>
<dbReference type="PROSITE" id="PS50293">
    <property type="entry name" value="TPR_REGION"/>
    <property type="match status" value="1"/>
</dbReference>
<organism>
    <name type="scientific">Arabidopsis thaliana</name>
    <name type="common">Mouse-ear cress</name>
    <dbReference type="NCBI Taxonomy" id="3702"/>
    <lineage>
        <taxon>Eukaryota</taxon>
        <taxon>Viridiplantae</taxon>
        <taxon>Streptophyta</taxon>
        <taxon>Embryophyta</taxon>
        <taxon>Tracheophyta</taxon>
        <taxon>Spermatophyta</taxon>
        <taxon>Magnoliopsida</taxon>
        <taxon>eudicotyledons</taxon>
        <taxon>Gunneridae</taxon>
        <taxon>Pentapetalae</taxon>
        <taxon>rosids</taxon>
        <taxon>malvids</taxon>
        <taxon>Brassicales</taxon>
        <taxon>Brassicaceae</taxon>
        <taxon>Camelineae</taxon>
        <taxon>Arabidopsis</taxon>
    </lineage>
</organism>
<reference key="1">
    <citation type="journal article" date="1999" name="Nature">
        <title>Sequence and analysis of chromosome 2 of the plant Arabidopsis thaliana.</title>
        <authorList>
            <person name="Lin X."/>
            <person name="Kaul S."/>
            <person name="Rounsley S.D."/>
            <person name="Shea T.P."/>
            <person name="Benito M.-I."/>
            <person name="Town C.D."/>
            <person name="Fujii C.Y."/>
            <person name="Mason T.M."/>
            <person name="Bowman C.L."/>
            <person name="Barnstead M.E."/>
            <person name="Feldblyum T.V."/>
            <person name="Buell C.R."/>
            <person name="Ketchum K.A."/>
            <person name="Lee J.J."/>
            <person name="Ronning C.M."/>
            <person name="Koo H.L."/>
            <person name="Moffat K.S."/>
            <person name="Cronin L.A."/>
            <person name="Shen M."/>
            <person name="Pai G."/>
            <person name="Van Aken S."/>
            <person name="Umayam L."/>
            <person name="Tallon L.J."/>
            <person name="Gill J.E."/>
            <person name="Adams M.D."/>
            <person name="Carrera A.J."/>
            <person name="Creasy T.H."/>
            <person name="Goodman H.M."/>
            <person name="Somerville C.R."/>
            <person name="Copenhaver G.P."/>
            <person name="Preuss D."/>
            <person name="Nierman W.C."/>
            <person name="White O."/>
            <person name="Eisen J.A."/>
            <person name="Salzberg S.L."/>
            <person name="Fraser C.M."/>
            <person name="Venter J.C."/>
        </authorList>
    </citation>
    <scope>NUCLEOTIDE SEQUENCE [LARGE SCALE GENOMIC DNA]</scope>
    <source>
        <strain>cv. Columbia</strain>
    </source>
</reference>
<reference key="2">
    <citation type="journal article" date="2017" name="Plant J.">
        <title>Araport11: a complete reannotation of the Arabidopsis thaliana reference genome.</title>
        <authorList>
            <person name="Cheng C.Y."/>
            <person name="Krishnakumar V."/>
            <person name="Chan A.P."/>
            <person name="Thibaud-Nissen F."/>
            <person name="Schobel S."/>
            <person name="Town C.D."/>
        </authorList>
    </citation>
    <scope>GENOME REANNOTATION</scope>
    <source>
        <strain>cv. Columbia</strain>
    </source>
</reference>
<reference key="3">
    <citation type="journal article" date="2003" name="Science">
        <title>Empirical analysis of transcriptional activity in the Arabidopsis genome.</title>
        <authorList>
            <person name="Yamada K."/>
            <person name="Lim J."/>
            <person name="Dale J.M."/>
            <person name="Chen H."/>
            <person name="Shinn P."/>
            <person name="Palm C.J."/>
            <person name="Southwick A.M."/>
            <person name="Wu H.C."/>
            <person name="Kim C.J."/>
            <person name="Nguyen M."/>
            <person name="Pham P.K."/>
            <person name="Cheuk R.F."/>
            <person name="Karlin-Newmann G."/>
            <person name="Liu S.X."/>
            <person name="Lam B."/>
            <person name="Sakano H."/>
            <person name="Wu T."/>
            <person name="Yu G."/>
            <person name="Miranda M."/>
            <person name="Quach H.L."/>
            <person name="Tripp M."/>
            <person name="Chang C.H."/>
            <person name="Lee J.M."/>
            <person name="Toriumi M.J."/>
            <person name="Chan M.M."/>
            <person name="Tang C.C."/>
            <person name="Onodera C.S."/>
            <person name="Deng J.M."/>
            <person name="Akiyama K."/>
            <person name="Ansari Y."/>
            <person name="Arakawa T."/>
            <person name="Banh J."/>
            <person name="Banno F."/>
            <person name="Bowser L."/>
            <person name="Brooks S.Y."/>
            <person name="Carninci P."/>
            <person name="Chao Q."/>
            <person name="Choy N."/>
            <person name="Enju A."/>
            <person name="Goldsmith A.D."/>
            <person name="Gurjal M."/>
            <person name="Hansen N.F."/>
            <person name="Hayashizaki Y."/>
            <person name="Johnson-Hopson C."/>
            <person name="Hsuan V.W."/>
            <person name="Iida K."/>
            <person name="Karnes M."/>
            <person name="Khan S."/>
            <person name="Koesema E."/>
            <person name="Ishida J."/>
            <person name="Jiang P.X."/>
            <person name="Jones T."/>
            <person name="Kawai J."/>
            <person name="Kamiya A."/>
            <person name="Meyers C."/>
            <person name="Nakajima M."/>
            <person name="Narusaka M."/>
            <person name="Seki M."/>
            <person name="Sakurai T."/>
            <person name="Satou M."/>
            <person name="Tamse R."/>
            <person name="Vaysberg M."/>
            <person name="Wallender E.K."/>
            <person name="Wong C."/>
            <person name="Yamamura Y."/>
            <person name="Yuan S."/>
            <person name="Shinozaki K."/>
            <person name="Davis R.W."/>
            <person name="Theologis A."/>
            <person name="Ecker J.R."/>
        </authorList>
    </citation>
    <scope>NUCLEOTIDE SEQUENCE [LARGE SCALE MRNA]</scope>
    <source>
        <strain>cv. Columbia</strain>
    </source>
</reference>
<reference key="4">
    <citation type="journal article" date="2009" name="J. Proteomics">
        <title>Phosphoproteomic analysis of nuclei-enriched fractions from Arabidopsis thaliana.</title>
        <authorList>
            <person name="Jones A.M.E."/>
            <person name="MacLean D."/>
            <person name="Studholme D.J."/>
            <person name="Serna-Sanz A."/>
            <person name="Andreasson E."/>
            <person name="Rathjen J.P."/>
            <person name="Peck S.C."/>
        </authorList>
    </citation>
    <scope>IDENTIFICATION BY MASS SPECTROMETRY [LARGE SCALE ANALYSIS]</scope>
    <source>
        <strain>cv. Columbia</strain>
    </source>
</reference>
<reference key="5">
    <citation type="journal article" date="2009" name="Plant Physiol.">
        <title>Large-scale Arabidopsis phosphoproteome profiling reveals novel chloroplast kinase substrates and phosphorylation networks.</title>
        <authorList>
            <person name="Reiland S."/>
            <person name="Messerli G."/>
            <person name="Baerenfaller K."/>
            <person name="Gerrits B."/>
            <person name="Endler A."/>
            <person name="Grossmann J."/>
            <person name="Gruissem W."/>
            <person name="Baginsky S."/>
        </authorList>
    </citation>
    <scope>IDENTIFICATION BY MASS SPECTROMETRY [LARGE SCALE ANALYSIS]</scope>
</reference>
<feature type="chain" id="PRO_0000311117" description="Uncharacterized TPR repeat-containing protein At2g32450">
    <location>
        <begin position="1"/>
        <end position="802"/>
    </location>
</feature>
<feature type="domain" description="EF-hand 1" evidence="1">
    <location>
        <begin position="6"/>
        <end position="41"/>
    </location>
</feature>
<feature type="repeat" description="TPR 1">
    <location>
        <begin position="229"/>
        <end position="262"/>
    </location>
</feature>
<feature type="repeat" description="TPR 2">
    <location>
        <begin position="264"/>
        <end position="296"/>
    </location>
</feature>
<feature type="repeat" description="TPR 3">
    <location>
        <begin position="305"/>
        <end position="338"/>
    </location>
</feature>
<feature type="repeat" description="TPR 4">
    <location>
        <begin position="339"/>
        <end position="372"/>
    </location>
</feature>
<feature type="repeat" description="TPR 5">
    <location>
        <begin position="373"/>
        <end position="406"/>
    </location>
</feature>
<feature type="repeat" description="TPR 6">
    <location>
        <begin position="407"/>
        <end position="440"/>
    </location>
</feature>
<feature type="repeat" description="TPR 7">
    <location>
        <begin position="442"/>
        <end position="474"/>
    </location>
</feature>
<feature type="domain" description="EF-hand 2" evidence="1">
    <location>
        <begin position="595"/>
        <end position="630"/>
    </location>
</feature>
<evidence type="ECO:0000255" key="1">
    <source>
        <dbReference type="PROSITE-ProRule" id="PRU00448"/>
    </source>
</evidence>
<keyword id="KW-0106">Calcium</keyword>
<keyword id="KW-1185">Reference proteome</keyword>
<keyword id="KW-0677">Repeat</keyword>
<keyword id="KW-0802">TPR repeat</keyword>
<sequence>MTTRGSRSEKVKRIFQQFDGNLDGGLSREEMSALVVAVNPRVKFSDEQISAILDEVFRTYAEFIDGDKGLTFDGLLRTYDDGAGDVDRDFDALGIEFNEETKGASEASSSSITDERAVEAQKQQRTAAWAVSPNHGIVFDETWKLVDDLEILVKRLKSKQEKDGKLKVDNNNVDAFSEAGWSRELGPSSDISDKRIYWEESSHDYGVFVKELGVLRSKADGARSREEAFDGHMAIGKVLYEHQLFKEALVSFKRACELQPTDVRPHFKAGNCLYVLGKYKESKDEFLLALEAAESGGNQWAYLLPQIYVNLGISLEGEGMVLSACEYYREAAILCPTHYRALKLLGSALFGVGEYRAAVKALEEAIYLKPDYADAHCDLASSLHAMGEDERAIEVFQRAIDLKPGHVDALYNLGGLYMDLGRFQRASEMYTRVLAVWPNHWRAQLNKAVSLLGAGETEEAKRALKEALKMTNRVELHDAVSHLKQLQKKKKVKKGNSANEEGPFIVVESSKFKTVGEKTTLRPDLAIALQVRAFQRVTRLWKCDVEALRREMRDNNVPVSYSGNGIPTKSIRRPNLEEILRRLLNVLKPETFQGAIKAINEKILSVLDDSGSGRVDLGMFYAVIAPLCGGHPDKRKRVAFDALLWKPVNEGSSQITKMEAVKYIKLLRAIYIPSQGMSEMLEVHGESDDTSTVTFNQFLEMYDDSEWGFGIMSTVFKLETRDRNRHGNQVCSVCRYPIIGSRFKEVKTGFSLCNQCYSEGKIPPTFKQQEEYKFREYASEVEAMKAKCVCFSMQSHKKTIAT</sequence>
<proteinExistence type="evidence at protein level"/>